<feature type="chain" id="PRO_0000245228" description="Collagen alpha-1(XXIII) chain">
    <location>
        <begin position="1"/>
        <end position="532"/>
    </location>
</feature>
<feature type="topological domain" description="Cytoplasmic" evidence="1">
    <location>
        <begin position="1"/>
        <end position="23"/>
    </location>
</feature>
<feature type="transmembrane region" description="Helical; Signal-anchor for type II membrane protein" evidence="1">
    <location>
        <begin position="24"/>
        <end position="45"/>
    </location>
</feature>
<feature type="topological domain" description="Extracellular" evidence="1">
    <location>
        <begin position="46"/>
        <end position="532"/>
    </location>
</feature>
<feature type="domain" description="Collagen-like 1">
    <location>
        <begin position="108"/>
        <end position="163"/>
    </location>
</feature>
<feature type="domain" description="Collagen-like 2">
    <location>
        <begin position="173"/>
        <end position="232"/>
    </location>
</feature>
<feature type="domain" description="Collagen-like 3">
    <location>
        <begin position="242"/>
        <end position="297"/>
    </location>
</feature>
<feature type="domain" description="Collagen-like 4">
    <location>
        <begin position="313"/>
        <end position="372"/>
    </location>
</feature>
<feature type="domain" description="Collagen-like 5">
    <location>
        <begin position="404"/>
        <end position="452"/>
    </location>
</feature>
<feature type="domain" description="Collagen-like 6">
    <location>
        <begin position="455"/>
        <end position="514"/>
    </location>
</feature>
<feature type="region of interest" description="Disordered" evidence="2">
    <location>
        <begin position="102"/>
        <end position="532"/>
    </location>
</feature>
<feature type="compositionally biased region" description="Low complexity" evidence="2">
    <location>
        <begin position="129"/>
        <end position="145"/>
    </location>
</feature>
<feature type="compositionally biased region" description="Low complexity" evidence="2">
    <location>
        <begin position="157"/>
        <end position="172"/>
    </location>
</feature>
<feature type="compositionally biased region" description="Pro residues" evidence="2">
    <location>
        <begin position="174"/>
        <end position="184"/>
    </location>
</feature>
<feature type="compositionally biased region" description="Pro residues" evidence="2">
    <location>
        <begin position="241"/>
        <end position="250"/>
    </location>
</feature>
<feature type="compositionally biased region" description="Pro residues" evidence="2">
    <location>
        <begin position="314"/>
        <end position="326"/>
    </location>
</feature>
<feature type="compositionally biased region" description="Basic and acidic residues" evidence="2">
    <location>
        <begin position="342"/>
        <end position="354"/>
    </location>
</feature>
<feature type="compositionally biased region" description="Basic and acidic residues" evidence="2">
    <location>
        <begin position="380"/>
        <end position="393"/>
    </location>
</feature>
<feature type="compositionally biased region" description="Pro residues" evidence="2">
    <location>
        <begin position="403"/>
        <end position="414"/>
    </location>
</feature>
<feature type="compositionally biased region" description="Basic and acidic residues" evidence="2">
    <location>
        <begin position="427"/>
        <end position="441"/>
    </location>
</feature>
<feature type="compositionally biased region" description="Basic and acidic residues" evidence="2">
    <location>
        <begin position="478"/>
        <end position="495"/>
    </location>
</feature>
<name>CONA1_RAT</name>
<organism>
    <name type="scientific">Rattus norvegicus</name>
    <name type="common">Rat</name>
    <dbReference type="NCBI Taxonomy" id="10116"/>
    <lineage>
        <taxon>Eukaryota</taxon>
        <taxon>Metazoa</taxon>
        <taxon>Chordata</taxon>
        <taxon>Craniata</taxon>
        <taxon>Vertebrata</taxon>
        <taxon>Euteleostomi</taxon>
        <taxon>Mammalia</taxon>
        <taxon>Eutheria</taxon>
        <taxon>Euarchontoglires</taxon>
        <taxon>Glires</taxon>
        <taxon>Rodentia</taxon>
        <taxon>Myomorpha</taxon>
        <taxon>Muroidea</taxon>
        <taxon>Muridae</taxon>
        <taxon>Murinae</taxon>
        <taxon>Rattus</taxon>
    </lineage>
</organism>
<gene>
    <name type="primary">Col23a1</name>
</gene>
<keyword id="KW-1003">Cell membrane</keyword>
<keyword id="KW-0176">Collagen</keyword>
<keyword id="KW-0472">Membrane</keyword>
<keyword id="KW-1185">Reference proteome</keyword>
<keyword id="KW-0677">Repeat</keyword>
<keyword id="KW-0735">Signal-anchor</keyword>
<keyword id="KW-0812">Transmembrane</keyword>
<keyword id="KW-1133">Transmembrane helix</keyword>
<proteinExistence type="evidence at protein level"/>
<protein>
    <recommendedName>
        <fullName>Collagen alpha-1(XXIII) chain</fullName>
    </recommendedName>
</protein>
<accession>Q810Y4</accession>
<sequence length="532" mass="51397">MGAGERAAGGGGTQDPGAGCGARALGALCLLLSVGSATACLLLGAQAAALHGRVAALEQERELLRRAGPSGALAAWAETHLERLLREKLDGVAKLRTVREAPSECICPPGPPGRRGKPGRRGDPGPPGQSGRDGYPGPLGLDGKPGLPGPKGEKGAPGDFGPRGAQGQDGAAGPPGPPGPPGARGPPGDTGKDGPRGAQGPEGPRGESGQDGEMGPMGPPGPKGEPGTPGKKGDDGIPSQPGLPGPPGPKGEPGDVGPQGETGVDGAPGLKGEPGHPGTDGAIGPRGPPGLKGEQGDTVVIDYDGRILDALKGPPGPQGAPGPPGIPGAKGELGLPGAPGIDGEKGPKGPKGDPGEPGPAGPKGETGEMGLSGLPGADGPKGEKGESASDHLQESLAQIIVEPGPPGPPGPPGPMGLQGIQGPKGLDGAKGEKGASGERGPHGLPGPVGPPGLIGLPGTKGEKGRPGEPGLDGFPGPRGEKGDRSERGEKGERGVPGRKGVKGQKGEPGPPGLDQPCPVGPDGLPVPGCWHK</sequence>
<dbReference type="EMBL" id="AY158896">
    <property type="protein sequence ID" value="AAO18362.1"/>
    <property type="molecule type" value="mRNA"/>
</dbReference>
<dbReference type="RefSeq" id="NP_853667.1">
    <property type="nucleotide sequence ID" value="NM_181636.2"/>
</dbReference>
<dbReference type="RefSeq" id="XP_017453116.1">
    <property type="nucleotide sequence ID" value="XM_017597627.1"/>
</dbReference>
<dbReference type="RefSeq" id="XP_017459534.1">
    <property type="nucleotide sequence ID" value="XM_017604045.1"/>
</dbReference>
<dbReference type="SMR" id="Q810Y4"/>
<dbReference type="ComplexPortal" id="CPX-50">
    <property type="entry name" value="Collagen type XXIII trimer"/>
</dbReference>
<dbReference type="FunCoup" id="Q810Y4">
    <property type="interactions" value="89"/>
</dbReference>
<dbReference type="STRING" id="10116.ENSRNOP00000062298"/>
<dbReference type="GlyGen" id="Q810Y4">
    <property type="glycosylation" value="1 site"/>
</dbReference>
<dbReference type="PhosphoSitePlus" id="Q810Y4"/>
<dbReference type="PaxDb" id="10116-ENSRNOP00000062298"/>
<dbReference type="Ensembl" id="ENSRNOT00000064078.2">
    <property type="protein sequence ID" value="ENSRNOP00000062298.2"/>
    <property type="gene ID" value="ENSRNOG00000003349.7"/>
</dbReference>
<dbReference type="GeneID" id="353303"/>
<dbReference type="KEGG" id="rno:353303"/>
<dbReference type="UCSC" id="RGD:727898">
    <property type="organism name" value="rat"/>
</dbReference>
<dbReference type="AGR" id="RGD:727898"/>
<dbReference type="CTD" id="91522"/>
<dbReference type="RGD" id="727898">
    <property type="gene designation" value="Col23a1"/>
</dbReference>
<dbReference type="eggNOG" id="KOG3544">
    <property type="taxonomic scope" value="Eukaryota"/>
</dbReference>
<dbReference type="GeneTree" id="ENSGT00940000162238"/>
<dbReference type="InParanoid" id="Q810Y4"/>
<dbReference type="OMA" id="ITAHSEF"/>
<dbReference type="OrthoDB" id="5983381at2759"/>
<dbReference type="PhylomeDB" id="Q810Y4"/>
<dbReference type="Reactome" id="R-RNO-1650814">
    <property type="pathway name" value="Collagen biosynthesis and modifying enzymes"/>
</dbReference>
<dbReference type="Reactome" id="R-RNO-8948216">
    <property type="pathway name" value="Collagen chain trimerization"/>
</dbReference>
<dbReference type="PRO" id="PR:Q810Y4"/>
<dbReference type="Proteomes" id="UP000002494">
    <property type="component" value="Chromosome 10"/>
</dbReference>
<dbReference type="GO" id="GO:0009986">
    <property type="term" value="C:cell surface"/>
    <property type="evidence" value="ECO:0000314"/>
    <property type="project" value="RGD"/>
</dbReference>
<dbReference type="GO" id="GO:0005581">
    <property type="term" value="C:collagen trimer"/>
    <property type="evidence" value="ECO:0007669"/>
    <property type="project" value="UniProtKB-KW"/>
</dbReference>
<dbReference type="GO" id="GO:0062023">
    <property type="term" value="C:collagen-containing extracellular matrix"/>
    <property type="evidence" value="ECO:0000318"/>
    <property type="project" value="GO_Central"/>
</dbReference>
<dbReference type="GO" id="GO:0005615">
    <property type="term" value="C:extracellular space"/>
    <property type="evidence" value="ECO:0000314"/>
    <property type="project" value="RGD"/>
</dbReference>
<dbReference type="GO" id="GO:0005886">
    <property type="term" value="C:plasma membrane"/>
    <property type="evidence" value="ECO:0007669"/>
    <property type="project" value="UniProtKB-SubCell"/>
</dbReference>
<dbReference type="GO" id="GO:0030020">
    <property type="term" value="F:extracellular matrix structural constituent conferring tensile strength"/>
    <property type="evidence" value="ECO:0000318"/>
    <property type="project" value="GO_Central"/>
</dbReference>
<dbReference type="GO" id="GO:0008201">
    <property type="term" value="F:heparin binding"/>
    <property type="evidence" value="ECO:0000353"/>
    <property type="project" value="RGD"/>
</dbReference>
<dbReference type="GO" id="GO:0042802">
    <property type="term" value="F:identical protein binding"/>
    <property type="evidence" value="ECO:0000353"/>
    <property type="project" value="IntAct"/>
</dbReference>
<dbReference type="InterPro" id="IPR008160">
    <property type="entry name" value="Collagen"/>
</dbReference>
<dbReference type="InterPro" id="IPR050938">
    <property type="entry name" value="Collagen_Structural_Proteins"/>
</dbReference>
<dbReference type="PANTHER" id="PTHR37456:SF4">
    <property type="entry name" value="COLLAGEN ALPHA-1(XXIII) CHAIN"/>
    <property type="match status" value="1"/>
</dbReference>
<dbReference type="PANTHER" id="PTHR37456">
    <property type="entry name" value="SI:CH211-266K2.1"/>
    <property type="match status" value="1"/>
</dbReference>
<dbReference type="Pfam" id="PF01391">
    <property type="entry name" value="Collagen"/>
    <property type="match status" value="6"/>
</dbReference>
<reference key="1">
    <citation type="journal article" date="2003" name="J. Biol. Chem.">
        <title>Type XXIII collagen, a new transmembrane collagen identified in metastatic tumor cells.</title>
        <authorList>
            <person name="Banyard J."/>
            <person name="Bao L."/>
            <person name="Zetter B.R."/>
        </authorList>
    </citation>
    <scope>NUCLEOTIDE SEQUENCE [MRNA]</scope>
    <scope>SUBCELLULAR LOCATION</scope>
    <scope>SUBUNIT</scope>
    <scope>PROTEOLYTIC PROCESSING</scope>
    <source>
        <strain>COP</strain>
    </source>
</reference>
<comment type="subunit">
    <text evidence="3">Homotrimer.</text>
</comment>
<comment type="interaction">
    <interactant intactId="EBI-10095843">
        <id>Q810Y4</id>
    </interactant>
    <interactant intactId="EBI-10095843">
        <id>Q810Y4</id>
        <label>Col23a1</label>
    </interactant>
    <organismsDiffer>false</organismsDiffer>
    <experiments>2</experiments>
</comment>
<comment type="subcellular location">
    <subcellularLocation>
        <location evidence="3">Cell membrane</location>
        <topology evidence="3">Single-pass type II membrane protein</topology>
        <orientation evidence="3">Extracellular side</orientation>
    </subcellularLocation>
</comment>
<comment type="PTM">
    <text evidence="3">Undergoes proteolytic cleavage by furin protease to yield a 60 kDa soluble form that forms a homotrimer and exhibits a low affinity interaction with heparin.</text>
</comment>
<evidence type="ECO:0000255" key="1"/>
<evidence type="ECO:0000256" key="2">
    <source>
        <dbReference type="SAM" id="MobiDB-lite"/>
    </source>
</evidence>
<evidence type="ECO:0000269" key="3">
    <source>
    </source>
</evidence>